<name>ETFA_PONAB</name>
<evidence type="ECO:0000250" key="1">
    <source>
        <dbReference type="UniProtKB" id="P13804"/>
    </source>
</evidence>
<evidence type="ECO:0000250" key="2">
    <source>
        <dbReference type="UniProtKB" id="Q99LC5"/>
    </source>
</evidence>
<evidence type="ECO:0000255" key="3"/>
<evidence type="ECO:0000305" key="4"/>
<organism>
    <name type="scientific">Pongo abelii</name>
    <name type="common">Sumatran orangutan</name>
    <name type="synonym">Pongo pygmaeus abelii</name>
    <dbReference type="NCBI Taxonomy" id="9601"/>
    <lineage>
        <taxon>Eukaryota</taxon>
        <taxon>Metazoa</taxon>
        <taxon>Chordata</taxon>
        <taxon>Craniata</taxon>
        <taxon>Vertebrata</taxon>
        <taxon>Euteleostomi</taxon>
        <taxon>Mammalia</taxon>
        <taxon>Eutheria</taxon>
        <taxon>Euarchontoglires</taxon>
        <taxon>Primates</taxon>
        <taxon>Haplorrhini</taxon>
        <taxon>Catarrhini</taxon>
        <taxon>Hominidae</taxon>
        <taxon>Pongo</taxon>
    </lineage>
</organism>
<proteinExistence type="evidence at transcript level"/>
<gene>
    <name type="primary">ETFA</name>
</gene>
<protein>
    <recommendedName>
        <fullName>Electron transfer flavoprotein subunit alpha, mitochondrial</fullName>
        <shortName>Alpha-ETF</shortName>
    </recommendedName>
</protein>
<accession>Q5RC31</accession>
<keyword id="KW-0007">Acetylation</keyword>
<keyword id="KW-0249">Electron transport</keyword>
<keyword id="KW-0274">FAD</keyword>
<keyword id="KW-0285">Flavoprotein</keyword>
<keyword id="KW-0496">Mitochondrion</keyword>
<keyword id="KW-0597">Phosphoprotein</keyword>
<keyword id="KW-1185">Reference proteome</keyword>
<keyword id="KW-0809">Transit peptide</keyword>
<keyword id="KW-0813">Transport</keyword>
<reference key="1">
    <citation type="submission" date="2004-11" db="EMBL/GenBank/DDBJ databases">
        <authorList>
            <consortium name="The German cDNA consortium"/>
        </authorList>
    </citation>
    <scope>NUCLEOTIDE SEQUENCE [LARGE SCALE MRNA]</scope>
    <source>
        <tissue>Kidney</tissue>
    </source>
</reference>
<feature type="transit peptide" description="Mitochondrion" evidence="3">
    <location>
        <begin position="1"/>
        <end position="19"/>
    </location>
</feature>
<feature type="chain" id="PRO_0000008653" description="Electron transfer flavoprotein subunit alpha, mitochondrial">
    <location>
        <begin position="20"/>
        <end position="333"/>
    </location>
</feature>
<feature type="region of interest" description="Domain I" evidence="1">
    <location>
        <begin position="20"/>
        <end position="204"/>
    </location>
</feature>
<feature type="region of interest" description="Domain II" evidence="1">
    <location>
        <begin position="205"/>
        <end position="333"/>
    </location>
</feature>
<feature type="binding site" evidence="1">
    <location>
        <position position="223"/>
    </location>
    <ligand>
        <name>FAD</name>
        <dbReference type="ChEBI" id="CHEBI:57692"/>
    </ligand>
</feature>
<feature type="binding site" evidence="1">
    <location>
        <position position="248"/>
    </location>
    <ligand>
        <name>FAD</name>
        <dbReference type="ChEBI" id="CHEBI:57692"/>
    </ligand>
</feature>
<feature type="binding site" evidence="1">
    <location>
        <begin position="263"/>
        <end position="266"/>
    </location>
    <ligand>
        <name>FAD</name>
        <dbReference type="ChEBI" id="CHEBI:57692"/>
    </ligand>
</feature>
<feature type="binding site" evidence="1">
    <location>
        <begin position="281"/>
        <end position="286"/>
    </location>
    <ligand>
        <name>FAD</name>
        <dbReference type="ChEBI" id="CHEBI:57692"/>
    </ligand>
</feature>
<feature type="binding site" evidence="1">
    <location>
        <position position="300"/>
    </location>
    <ligand>
        <name>FAD</name>
        <dbReference type="ChEBI" id="CHEBI:57692"/>
    </ligand>
</feature>
<feature type="binding site" evidence="1">
    <location>
        <begin position="318"/>
        <end position="319"/>
    </location>
    <ligand>
        <name>FAD</name>
        <dbReference type="ChEBI" id="CHEBI:57692"/>
    </ligand>
</feature>
<feature type="modified residue" description="N6-acetyllysine; alternate" evidence="2">
    <location>
        <position position="59"/>
    </location>
</feature>
<feature type="modified residue" description="N6-succinyllysine; alternate" evidence="2">
    <location>
        <position position="59"/>
    </location>
</feature>
<feature type="modified residue" description="N6-acetyllysine" evidence="2">
    <location>
        <position position="62"/>
    </location>
</feature>
<feature type="modified residue" description="N6-acetyllysine; alternate" evidence="2">
    <location>
        <position position="69"/>
    </location>
</feature>
<feature type="modified residue" description="N6-succinyllysine; alternate" evidence="2">
    <location>
        <position position="69"/>
    </location>
</feature>
<feature type="modified residue" description="N6-acetyllysine" evidence="2">
    <location>
        <position position="75"/>
    </location>
</feature>
<feature type="modified residue" description="Phosphothreonine" evidence="2">
    <location>
        <position position="93"/>
    </location>
</feature>
<feature type="modified residue" description="N6-acetyllysine" evidence="2">
    <location>
        <position position="101"/>
    </location>
</feature>
<feature type="modified residue" description="N6-acetyllysine" evidence="2">
    <location>
        <position position="139"/>
    </location>
</feature>
<feature type="modified residue" description="Phosphoserine" evidence="1">
    <location>
        <position position="140"/>
    </location>
</feature>
<feature type="modified residue" description="N6-acetyllysine; alternate" evidence="2">
    <location>
        <position position="158"/>
    </location>
</feature>
<feature type="modified residue" description="N6-succinyllysine; alternate" evidence="2">
    <location>
        <position position="158"/>
    </location>
</feature>
<feature type="modified residue" description="N6-acetyllysine" evidence="2">
    <location>
        <position position="164"/>
    </location>
</feature>
<feature type="modified residue" description="N6-succinyllysine" evidence="2">
    <location>
        <position position="187"/>
    </location>
</feature>
<feature type="modified residue" description="N6-acetyllysine; alternate" evidence="2">
    <location>
        <position position="203"/>
    </location>
</feature>
<feature type="modified residue" description="N6-succinyllysine; alternate" evidence="2">
    <location>
        <position position="203"/>
    </location>
</feature>
<feature type="modified residue" description="N6-succinyllysine" evidence="2">
    <location>
        <position position="216"/>
    </location>
</feature>
<feature type="modified residue" description="N6-acetyllysine; alternate" evidence="2">
    <location>
        <position position="226"/>
    </location>
</feature>
<feature type="modified residue" description="N6-succinyllysine; alternate" evidence="2">
    <location>
        <position position="226"/>
    </location>
</feature>
<feature type="modified residue" description="N6-acetyllysine; alternate" evidence="2">
    <location>
        <position position="232"/>
    </location>
</feature>
<feature type="modified residue" description="N6-succinyllysine; alternate" evidence="2">
    <location>
        <position position="232"/>
    </location>
</feature>
<feature type="modified residue" description="N6-succinyllysine" evidence="2">
    <location>
        <position position="301"/>
    </location>
</feature>
<comment type="function">
    <text evidence="1">Heterodimeric electron transfer flavoprotein that accepts electrons from several mitochondrial dehydrogenases, including acyl-CoA dehydrogenases, glutaryl-CoA and sarcosine dehydrogenase. It transfers the electrons to the main mitochondrial respiratory chain via ETF-ubiquinone oxidoreductase (ETF dehydrogenase). Required for normal mitochondrial fatty acid oxidation and normal amino acid metabolism.</text>
</comment>
<comment type="cofactor">
    <cofactor evidence="1">
        <name>FAD</name>
        <dbReference type="ChEBI" id="CHEBI:57692"/>
    </cofactor>
    <text evidence="1">Binds 1 FAD per dimer.</text>
</comment>
<comment type="subunit">
    <text evidence="1 2">Heterodimer composed of ETFA and ETFB. Identified in a complex that contains ETFA, ETFB and ETFRF1. Interaction with ETFRF1 promotes dissociation of the bound FAD and loss of electron transfer activity (By similarity). Interacts with TASOR (By similarity).</text>
</comment>
<comment type="subcellular location">
    <subcellularLocation>
        <location evidence="1">Mitochondrion matrix</location>
    </subcellularLocation>
</comment>
<comment type="domain">
    <text evidence="1">Domain I shares an identical polypeptide fold with the beta subunit ETFB though there is no sequence similarity.</text>
</comment>
<comment type="similarity">
    <text evidence="4">Belongs to the ETF alpha-subunit/FixB family.</text>
</comment>
<dbReference type="EMBL" id="CR858451">
    <property type="protein sequence ID" value="CAH90679.1"/>
    <property type="molecule type" value="mRNA"/>
</dbReference>
<dbReference type="RefSeq" id="NP_001125371.1">
    <property type="nucleotide sequence ID" value="NM_001131899.2"/>
</dbReference>
<dbReference type="SMR" id="Q5RC31"/>
<dbReference type="FunCoup" id="Q5RC31">
    <property type="interactions" value="1420"/>
</dbReference>
<dbReference type="STRING" id="9601.ENSPPYP00000007571"/>
<dbReference type="GeneID" id="100172274"/>
<dbReference type="KEGG" id="pon:100172274"/>
<dbReference type="CTD" id="2108"/>
<dbReference type="eggNOG" id="KOG3954">
    <property type="taxonomic scope" value="Eukaryota"/>
</dbReference>
<dbReference type="InParanoid" id="Q5RC31"/>
<dbReference type="OrthoDB" id="1715808at2759"/>
<dbReference type="Proteomes" id="UP000001595">
    <property type="component" value="Unplaced"/>
</dbReference>
<dbReference type="GO" id="GO:0005759">
    <property type="term" value="C:mitochondrial matrix"/>
    <property type="evidence" value="ECO:0007669"/>
    <property type="project" value="UniProtKB-SubCell"/>
</dbReference>
<dbReference type="GO" id="GO:0009055">
    <property type="term" value="F:electron transfer activity"/>
    <property type="evidence" value="ECO:0000250"/>
    <property type="project" value="UniProtKB"/>
</dbReference>
<dbReference type="GO" id="GO:0050660">
    <property type="term" value="F:flavin adenine dinucleotide binding"/>
    <property type="evidence" value="ECO:0007669"/>
    <property type="project" value="InterPro"/>
</dbReference>
<dbReference type="GO" id="GO:0033539">
    <property type="term" value="P:fatty acid beta-oxidation using acyl-CoA dehydrogenase"/>
    <property type="evidence" value="ECO:0000250"/>
    <property type="project" value="UniProtKB"/>
</dbReference>
<dbReference type="CDD" id="cd01715">
    <property type="entry name" value="ETF_alpha"/>
    <property type="match status" value="1"/>
</dbReference>
<dbReference type="FunFam" id="3.40.50.620:FF:000041">
    <property type="entry name" value="Electron transfer flavoprotein alpha subunit"/>
    <property type="match status" value="1"/>
</dbReference>
<dbReference type="FunFam" id="3.40.50.1220:FF:000001">
    <property type="entry name" value="Electron transfer flavoprotein, alpha subunit"/>
    <property type="match status" value="1"/>
</dbReference>
<dbReference type="Gene3D" id="3.40.50.620">
    <property type="entry name" value="HUPs"/>
    <property type="match status" value="1"/>
</dbReference>
<dbReference type="Gene3D" id="3.40.50.1220">
    <property type="entry name" value="TPP-binding domain"/>
    <property type="match status" value="1"/>
</dbReference>
<dbReference type="InterPro" id="IPR029035">
    <property type="entry name" value="DHS-like_NAD/FAD-binding_dom"/>
</dbReference>
<dbReference type="InterPro" id="IPR014730">
    <property type="entry name" value="ETF_a/b_N"/>
</dbReference>
<dbReference type="InterPro" id="IPR001308">
    <property type="entry name" value="ETF_a/FixB"/>
</dbReference>
<dbReference type="InterPro" id="IPR033947">
    <property type="entry name" value="ETF_alpha_N"/>
</dbReference>
<dbReference type="InterPro" id="IPR014731">
    <property type="entry name" value="ETF_asu_C"/>
</dbReference>
<dbReference type="InterPro" id="IPR018206">
    <property type="entry name" value="ETF_asu_C_CS"/>
</dbReference>
<dbReference type="InterPro" id="IPR014729">
    <property type="entry name" value="Rossmann-like_a/b/a_fold"/>
</dbReference>
<dbReference type="PANTHER" id="PTHR43153">
    <property type="entry name" value="ELECTRON TRANSFER FLAVOPROTEIN ALPHA"/>
    <property type="match status" value="1"/>
</dbReference>
<dbReference type="PANTHER" id="PTHR43153:SF1">
    <property type="entry name" value="ELECTRON TRANSFER FLAVOPROTEIN SUBUNIT ALPHA, MITOCHONDRIAL"/>
    <property type="match status" value="1"/>
</dbReference>
<dbReference type="Pfam" id="PF01012">
    <property type="entry name" value="ETF"/>
    <property type="match status" value="1"/>
</dbReference>
<dbReference type="Pfam" id="PF00766">
    <property type="entry name" value="ETF_alpha"/>
    <property type="match status" value="1"/>
</dbReference>
<dbReference type="PIRSF" id="PIRSF000089">
    <property type="entry name" value="Electra_flavoP_a"/>
    <property type="match status" value="1"/>
</dbReference>
<dbReference type="SMART" id="SM00893">
    <property type="entry name" value="ETF"/>
    <property type="match status" value="1"/>
</dbReference>
<dbReference type="SUPFAM" id="SSF52402">
    <property type="entry name" value="Adenine nucleotide alpha hydrolases-like"/>
    <property type="match status" value="1"/>
</dbReference>
<dbReference type="SUPFAM" id="SSF52467">
    <property type="entry name" value="DHS-like NAD/FAD-binding domain"/>
    <property type="match status" value="1"/>
</dbReference>
<dbReference type="PROSITE" id="PS00696">
    <property type="entry name" value="ETF_ALPHA"/>
    <property type="match status" value="1"/>
</dbReference>
<sequence length="333" mass="35166">MFRAAAPGQLRRAASLLRFQSTLVIAEHADDSLAPITLNTITAATRLGGEVSCLVAGTKCDKVAQDLCKVAGIAKVLVAQHDVYRGLLPEELTPLILATQKQFNYTHICAGASAFGKNLLPRVAAKLEVAPISDIIAIKSPDTFVRTIYAGNALCTVKCDEKVKVFSVRGTSFEAAATSGGSASSEKASSTSPVEISEWLDQKLTKSDRPELTGAKVVVSGGRGLKSGENFKLLYDLADQRHAAVGASRAAVDAGFVPNDMQVGQTGKIVAPELYIAVGISGAIQHLAGMKDSKTIVAINKDPEAPIFQVADYGIVADLFKVVPEMTEILKKK</sequence>